<dbReference type="GO" id="GO:0005576">
    <property type="term" value="C:extracellular region"/>
    <property type="evidence" value="ECO:0007669"/>
    <property type="project" value="UniProtKB-SubCell"/>
</dbReference>
<dbReference type="GO" id="GO:0007218">
    <property type="term" value="P:neuropeptide signaling pathway"/>
    <property type="evidence" value="ECO:0007669"/>
    <property type="project" value="UniProtKB-KW"/>
</dbReference>
<dbReference type="InterPro" id="IPR013231">
    <property type="entry name" value="Periviscerokinin"/>
</dbReference>
<dbReference type="Pfam" id="PF08259">
    <property type="entry name" value="Periviscerokin"/>
    <property type="match status" value="1"/>
</dbReference>
<protein>
    <recommendedName>
        <fullName>Periviscerokinin-2</fullName>
        <shortName>Lem-PVK-2</shortName>
        <shortName>RhyMa-PVK-2</shortName>
    </recommendedName>
</protein>
<comment type="function">
    <text evidence="1">Mediates visceral muscle contractile activity (myotropic activity).</text>
</comment>
<comment type="subcellular location">
    <subcellularLocation>
        <location>Secreted</location>
    </subcellularLocation>
</comment>
<comment type="mass spectrometry" mass="1102.6" method="MALDI" evidence="1"/>
<comment type="similarity">
    <text evidence="3">Belongs to the periviscerokinin family.</text>
</comment>
<accession>P83926</accession>
<accession>P82699</accession>
<accession>P85767</accession>
<proteinExistence type="evidence at protein level"/>
<sequence length="11" mass="1103">GSSGLISMPRV</sequence>
<reference key="1">
    <citation type="journal article" date="2000" name="Eur. J. Biochem.">
        <title>Identification of novel periviscerokinins from single neurohaemal release sites in insects. MS/MS fragmentation complemented by Edman degradation.</title>
        <authorList>
            <person name="Predel R."/>
            <person name="Kellner R."/>
            <person name="Baggerman G."/>
            <person name="Steinmetzer T."/>
            <person name="Schoofs L."/>
        </authorList>
    </citation>
    <scope>PROTEIN SEQUENCE</scope>
    <scope>FUNCTION</scope>
    <scope>MASS SPECTROMETRY</scope>
    <scope>AMIDATION AT VAL-11</scope>
    <source>
        <tissue>Abdominal perisympathetic organs</tissue>
    </source>
</reference>
<reference key="2">
    <citation type="journal article" date="2009" name="BMC Evol. Biol.">
        <title>A proteomic approach for studying insect phylogeny: CAPA peptides of ancient insect taxa (Dictyoptera, Blattoptera) as a test case.</title>
        <authorList>
            <person name="Roth S."/>
            <person name="Fromm B."/>
            <person name="Gaede G."/>
            <person name="Predel R."/>
        </authorList>
    </citation>
    <scope>PROTEIN SEQUENCE</scope>
    <scope>AMIDATION AT VAL-11</scope>
    <source>
        <tissue>Abdominal perisympathetic organs</tissue>
    </source>
</reference>
<evidence type="ECO:0000269" key="1">
    <source>
    </source>
</evidence>
<evidence type="ECO:0000269" key="2">
    <source>
    </source>
</evidence>
<evidence type="ECO:0000305" key="3"/>
<organism>
    <name type="scientific">Rhyparobia maderae</name>
    <name type="common">Madeira cockroach</name>
    <name type="synonym">Leucophaea maderae</name>
    <dbReference type="NCBI Taxonomy" id="36963"/>
    <lineage>
        <taxon>Eukaryota</taxon>
        <taxon>Metazoa</taxon>
        <taxon>Ecdysozoa</taxon>
        <taxon>Arthropoda</taxon>
        <taxon>Hexapoda</taxon>
        <taxon>Insecta</taxon>
        <taxon>Pterygota</taxon>
        <taxon>Neoptera</taxon>
        <taxon>Polyneoptera</taxon>
        <taxon>Dictyoptera</taxon>
        <taxon>Blattodea</taxon>
        <taxon>Blaberoidea</taxon>
        <taxon>Blaberidae</taxon>
        <taxon>Oxyhaloinae</taxon>
        <taxon>Rhyparobia</taxon>
    </lineage>
</organism>
<name>PVK2_RHYMA</name>
<feature type="peptide" id="PRO_0000044263" description="Periviscerokinin-2">
    <location>
        <begin position="1"/>
        <end position="11"/>
    </location>
</feature>
<feature type="modified residue" description="Valine amide" evidence="1 2">
    <location>
        <position position="11"/>
    </location>
</feature>
<keyword id="KW-0027">Amidation</keyword>
<keyword id="KW-0903">Direct protein sequencing</keyword>
<keyword id="KW-0527">Neuropeptide</keyword>
<keyword id="KW-0964">Secreted</keyword>